<proteinExistence type="inferred from homology"/>
<reference key="1">
    <citation type="journal article" date="2005" name="Nat. Biotechnol.">
        <title>The complete genome sequence of the meat-borne lactic acid bacterium Lactobacillus sakei 23K.</title>
        <authorList>
            <person name="Chaillou S."/>
            <person name="Champomier-Verges M.-C."/>
            <person name="Cornet M."/>
            <person name="Crutz-Le Coq A.-M."/>
            <person name="Dudez A.-M."/>
            <person name="Martin V."/>
            <person name="Beaufils S."/>
            <person name="Darbon-Rongere E."/>
            <person name="Bossy R."/>
            <person name="Loux V."/>
            <person name="Zagorec M."/>
        </authorList>
    </citation>
    <scope>NUCLEOTIDE SEQUENCE [LARGE SCALE GENOMIC DNA]</scope>
    <source>
        <strain>23K</strain>
    </source>
</reference>
<name>RL332_LATSS</name>
<keyword id="KW-1185">Reference proteome</keyword>
<keyword id="KW-0687">Ribonucleoprotein</keyword>
<keyword id="KW-0689">Ribosomal protein</keyword>
<accession>Q38V01</accession>
<feature type="chain" id="PRO_0000356512" description="Large ribosomal subunit protein bL33B">
    <location>
        <begin position="1"/>
        <end position="49"/>
    </location>
</feature>
<gene>
    <name evidence="1" type="primary">rpmG2</name>
    <name type="ordered locus">LCA_1676</name>
</gene>
<evidence type="ECO:0000255" key="1">
    <source>
        <dbReference type="HAMAP-Rule" id="MF_00294"/>
    </source>
</evidence>
<protein>
    <recommendedName>
        <fullName evidence="1">Large ribosomal subunit protein bL33B</fullName>
    </recommendedName>
    <alternativeName>
        <fullName evidence="1">50S ribosomal protein L33 2</fullName>
    </alternativeName>
</protein>
<organism>
    <name type="scientific">Latilactobacillus sakei subsp. sakei (strain 23K)</name>
    <name type="common">Lactobacillus sakei subsp. sakei</name>
    <dbReference type="NCBI Taxonomy" id="314315"/>
    <lineage>
        <taxon>Bacteria</taxon>
        <taxon>Bacillati</taxon>
        <taxon>Bacillota</taxon>
        <taxon>Bacilli</taxon>
        <taxon>Lactobacillales</taxon>
        <taxon>Lactobacillaceae</taxon>
        <taxon>Latilactobacillus</taxon>
    </lineage>
</organism>
<comment type="similarity">
    <text evidence="1">Belongs to the bacterial ribosomal protein bL33 family.</text>
</comment>
<dbReference type="EMBL" id="CR936503">
    <property type="protein sequence ID" value="CAI55983.1"/>
    <property type="molecule type" value="Genomic_DNA"/>
</dbReference>
<dbReference type="SMR" id="Q38V01"/>
<dbReference type="STRING" id="314315.LCA_1676"/>
<dbReference type="KEGG" id="lsa:LCA_1676"/>
<dbReference type="eggNOG" id="COG0267">
    <property type="taxonomic scope" value="Bacteria"/>
</dbReference>
<dbReference type="HOGENOM" id="CLU_190949_0_1_9"/>
<dbReference type="OrthoDB" id="9801333at2"/>
<dbReference type="Proteomes" id="UP000002707">
    <property type="component" value="Chromosome"/>
</dbReference>
<dbReference type="GO" id="GO:0005737">
    <property type="term" value="C:cytoplasm"/>
    <property type="evidence" value="ECO:0007669"/>
    <property type="project" value="UniProtKB-ARBA"/>
</dbReference>
<dbReference type="GO" id="GO:1990904">
    <property type="term" value="C:ribonucleoprotein complex"/>
    <property type="evidence" value="ECO:0007669"/>
    <property type="project" value="UniProtKB-KW"/>
</dbReference>
<dbReference type="GO" id="GO:0005840">
    <property type="term" value="C:ribosome"/>
    <property type="evidence" value="ECO:0007669"/>
    <property type="project" value="UniProtKB-KW"/>
</dbReference>
<dbReference type="GO" id="GO:0003735">
    <property type="term" value="F:structural constituent of ribosome"/>
    <property type="evidence" value="ECO:0007669"/>
    <property type="project" value="InterPro"/>
</dbReference>
<dbReference type="GO" id="GO:0006412">
    <property type="term" value="P:translation"/>
    <property type="evidence" value="ECO:0007669"/>
    <property type="project" value="UniProtKB-UniRule"/>
</dbReference>
<dbReference type="Gene3D" id="2.20.28.120">
    <property type="entry name" value="Ribosomal protein L33"/>
    <property type="match status" value="1"/>
</dbReference>
<dbReference type="HAMAP" id="MF_00294">
    <property type="entry name" value="Ribosomal_bL33"/>
    <property type="match status" value="1"/>
</dbReference>
<dbReference type="InterPro" id="IPR001705">
    <property type="entry name" value="Ribosomal_bL33"/>
</dbReference>
<dbReference type="InterPro" id="IPR038584">
    <property type="entry name" value="Ribosomal_bL33_sf"/>
</dbReference>
<dbReference type="InterPro" id="IPR011332">
    <property type="entry name" value="Ribosomal_zn-bd"/>
</dbReference>
<dbReference type="NCBIfam" id="NF001764">
    <property type="entry name" value="PRK00504.1"/>
    <property type="match status" value="1"/>
</dbReference>
<dbReference type="NCBIfam" id="TIGR01023">
    <property type="entry name" value="rpmG_bact"/>
    <property type="match status" value="1"/>
</dbReference>
<dbReference type="Pfam" id="PF00471">
    <property type="entry name" value="Ribosomal_L33"/>
    <property type="match status" value="1"/>
</dbReference>
<dbReference type="SUPFAM" id="SSF57829">
    <property type="entry name" value="Zn-binding ribosomal proteins"/>
    <property type="match status" value="1"/>
</dbReference>
<sequence>MGVKKVALACTVCGSRNYYVAENKNRTERLELNKYCKHCGQYAQHKETR</sequence>